<dbReference type="EMBL" id="AP009256">
    <property type="protein sequence ID" value="BAF39115.1"/>
    <property type="molecule type" value="Genomic_DNA"/>
</dbReference>
<dbReference type="RefSeq" id="WP_003808046.1">
    <property type="nucleotide sequence ID" value="NC_008618.1"/>
</dbReference>
<dbReference type="SMR" id="A1A082"/>
<dbReference type="STRING" id="367928.BAD_0334"/>
<dbReference type="PaxDb" id="1680-BADO_0341"/>
<dbReference type="GeneID" id="98326270"/>
<dbReference type="KEGG" id="bad:BAD_0334"/>
<dbReference type="HOGENOM" id="CLU_139869_3_0_11"/>
<dbReference type="Proteomes" id="UP000008702">
    <property type="component" value="Chromosome"/>
</dbReference>
<dbReference type="GO" id="GO:0005737">
    <property type="term" value="C:cytoplasm"/>
    <property type="evidence" value="ECO:0007669"/>
    <property type="project" value="UniProtKB-ARBA"/>
</dbReference>
<dbReference type="GO" id="GO:0015935">
    <property type="term" value="C:small ribosomal subunit"/>
    <property type="evidence" value="ECO:0007669"/>
    <property type="project" value="TreeGrafter"/>
</dbReference>
<dbReference type="GO" id="GO:0019843">
    <property type="term" value="F:rRNA binding"/>
    <property type="evidence" value="ECO:0007669"/>
    <property type="project" value="UniProtKB-UniRule"/>
</dbReference>
<dbReference type="GO" id="GO:0003735">
    <property type="term" value="F:structural constituent of ribosome"/>
    <property type="evidence" value="ECO:0007669"/>
    <property type="project" value="InterPro"/>
</dbReference>
<dbReference type="GO" id="GO:0008270">
    <property type="term" value="F:zinc ion binding"/>
    <property type="evidence" value="ECO:0007669"/>
    <property type="project" value="UniProtKB-UniRule"/>
</dbReference>
<dbReference type="GO" id="GO:0006412">
    <property type="term" value="P:translation"/>
    <property type="evidence" value="ECO:0007669"/>
    <property type="project" value="UniProtKB-UniRule"/>
</dbReference>
<dbReference type="FunFam" id="4.10.830.10:FF:000001">
    <property type="entry name" value="30S ribosomal protein S14 type Z"/>
    <property type="match status" value="1"/>
</dbReference>
<dbReference type="Gene3D" id="4.10.830.10">
    <property type="entry name" value="30s Ribosomal Protein S14, Chain N"/>
    <property type="match status" value="1"/>
</dbReference>
<dbReference type="HAMAP" id="MF_01364_B">
    <property type="entry name" value="Ribosomal_uS14_2_B"/>
    <property type="match status" value="1"/>
</dbReference>
<dbReference type="InterPro" id="IPR001209">
    <property type="entry name" value="Ribosomal_uS14"/>
</dbReference>
<dbReference type="InterPro" id="IPR023053">
    <property type="entry name" value="Ribosomal_uS14_bact"/>
</dbReference>
<dbReference type="InterPro" id="IPR018271">
    <property type="entry name" value="Ribosomal_uS14_CS"/>
</dbReference>
<dbReference type="InterPro" id="IPR043140">
    <property type="entry name" value="Ribosomal_uS14_sf"/>
</dbReference>
<dbReference type="NCBIfam" id="NF005974">
    <property type="entry name" value="PRK08061.1"/>
    <property type="match status" value="1"/>
</dbReference>
<dbReference type="PANTHER" id="PTHR19836">
    <property type="entry name" value="30S RIBOSOMAL PROTEIN S14"/>
    <property type="match status" value="1"/>
</dbReference>
<dbReference type="PANTHER" id="PTHR19836:SF19">
    <property type="entry name" value="SMALL RIBOSOMAL SUBUNIT PROTEIN US14M"/>
    <property type="match status" value="1"/>
</dbReference>
<dbReference type="Pfam" id="PF00253">
    <property type="entry name" value="Ribosomal_S14"/>
    <property type="match status" value="1"/>
</dbReference>
<dbReference type="SUPFAM" id="SSF57716">
    <property type="entry name" value="Glucocorticoid receptor-like (DNA-binding domain)"/>
    <property type="match status" value="1"/>
</dbReference>
<dbReference type="PROSITE" id="PS00527">
    <property type="entry name" value="RIBOSOMAL_S14"/>
    <property type="match status" value="1"/>
</dbReference>
<gene>
    <name evidence="1" type="primary">rpsZ</name>
    <name evidence="1" type="synonym">rpsN</name>
    <name type="ordered locus">BAD_0334</name>
</gene>
<protein>
    <recommendedName>
        <fullName evidence="1">Small ribosomal subunit protein uS14</fullName>
    </recommendedName>
    <alternativeName>
        <fullName evidence="2">30S ribosomal protein S14 type Z</fullName>
    </alternativeName>
</protein>
<keyword id="KW-0479">Metal-binding</keyword>
<keyword id="KW-1185">Reference proteome</keyword>
<keyword id="KW-0687">Ribonucleoprotein</keyword>
<keyword id="KW-0689">Ribosomal protein</keyword>
<keyword id="KW-0694">RNA-binding</keyword>
<keyword id="KW-0699">rRNA-binding</keyword>
<keyword id="KW-0862">Zinc</keyword>
<organism>
    <name type="scientific">Bifidobacterium adolescentis (strain ATCC 15703 / DSM 20083 / NCTC 11814 / E194a)</name>
    <dbReference type="NCBI Taxonomy" id="367928"/>
    <lineage>
        <taxon>Bacteria</taxon>
        <taxon>Bacillati</taxon>
        <taxon>Actinomycetota</taxon>
        <taxon>Actinomycetes</taxon>
        <taxon>Bifidobacteriales</taxon>
        <taxon>Bifidobacteriaceae</taxon>
        <taxon>Bifidobacterium</taxon>
    </lineage>
</organism>
<evidence type="ECO:0000255" key="1">
    <source>
        <dbReference type="HAMAP-Rule" id="MF_01364"/>
    </source>
</evidence>
<evidence type="ECO:0000305" key="2"/>
<reference key="1">
    <citation type="submission" date="2006-12" db="EMBL/GenBank/DDBJ databases">
        <title>Bifidobacterium adolescentis complete genome sequence.</title>
        <authorList>
            <person name="Suzuki T."/>
            <person name="Tsuda Y."/>
            <person name="Kanou N."/>
            <person name="Inoue T."/>
            <person name="Kumazaki K."/>
            <person name="Nagano S."/>
            <person name="Hirai S."/>
            <person name="Tanaka K."/>
            <person name="Watanabe K."/>
        </authorList>
    </citation>
    <scope>NUCLEOTIDE SEQUENCE [LARGE SCALE GENOMIC DNA]</scope>
    <source>
        <strain>ATCC 15703 / DSM 20083 / NCTC 11814 / E194a</strain>
    </source>
</reference>
<sequence length="61" mass="6934">MAKTALKNKAAAKPKFKVRAYTRCQVCGRPHSVYRKFGLCRICLREKAHRGELPGVTKSSW</sequence>
<accession>A1A082</accession>
<proteinExistence type="inferred from homology"/>
<name>RS14Z_BIFAA</name>
<feature type="chain" id="PRO_1000067927" description="Small ribosomal subunit protein uS14">
    <location>
        <begin position="1"/>
        <end position="61"/>
    </location>
</feature>
<feature type="binding site" evidence="1">
    <location>
        <position position="24"/>
    </location>
    <ligand>
        <name>Zn(2+)</name>
        <dbReference type="ChEBI" id="CHEBI:29105"/>
    </ligand>
</feature>
<feature type="binding site" evidence="1">
    <location>
        <position position="27"/>
    </location>
    <ligand>
        <name>Zn(2+)</name>
        <dbReference type="ChEBI" id="CHEBI:29105"/>
    </ligand>
</feature>
<feature type="binding site" evidence="1">
    <location>
        <position position="40"/>
    </location>
    <ligand>
        <name>Zn(2+)</name>
        <dbReference type="ChEBI" id="CHEBI:29105"/>
    </ligand>
</feature>
<feature type="binding site" evidence="1">
    <location>
        <position position="43"/>
    </location>
    <ligand>
        <name>Zn(2+)</name>
        <dbReference type="ChEBI" id="CHEBI:29105"/>
    </ligand>
</feature>
<comment type="function">
    <text evidence="1">Binds 16S rRNA, required for the assembly of 30S particles and may also be responsible for determining the conformation of the 16S rRNA at the A site.</text>
</comment>
<comment type="cofactor">
    <cofactor evidence="1">
        <name>Zn(2+)</name>
        <dbReference type="ChEBI" id="CHEBI:29105"/>
    </cofactor>
    <text evidence="1">Binds 1 zinc ion per subunit.</text>
</comment>
<comment type="subunit">
    <text evidence="1">Part of the 30S ribosomal subunit. Contacts proteins S3 and S10.</text>
</comment>
<comment type="similarity">
    <text evidence="1">Belongs to the universal ribosomal protein uS14 family. Zinc-binding uS14 subfamily.</text>
</comment>